<sequence>MMRRVYSPVFCSVAAARFAATSAAKKYDLFGYEVDTNTAPWIEKIKKCKYYDEAGEVLVNMNVSNCPPDIATYNATLQCIYQSPSKQSTPVDNESKFCAMMDLLEEMQHRNRLKPNEESWTWVMKECVKSGQFRLGYCIQQVMETECKGCPADLVKANEANAQKAKTEGKEHPGHLSQQAGLFDVKVE</sequence>
<comment type="function">
    <text evidence="2 3 4 7">Mitochondrial membrane ATP synthase (F(1)F(o) ATP synthase) produces ATP from ADP in the presence of a proton gradient across the membrane which is generated by electron transport complexes of the respiratory chain (PubMed:19436713, PubMed:29247468). F-type ATPases consist of two structural domains, F(1) - containing the extramembraneous catalytic core, and F(o) - containing the membrane proton channel, linked together by a central stalk and a peripheral stalk (PubMed:19436713, PubMed:29247468, PubMed:29440423). During catalysis, ATP synthesis in the catalytic domain of F(1) is coupled via a rotary mechanism of the central stalk subunits to proton translocation. Subunits alpha and beta form the catalytic core in F(1) (PubMed:19436713, PubMed:29440423). Rotation of the central stalk against the surrounding alpha(3)beta(3) subunits leads to hydrolysis of ATP in three separate catalytic sites on the beta subunits (Probable). Contrary to the procyclic, insect form that requires F(1)F(o) ATP synthase for ATP synthesis, the bloodstream form relies on ATP hydrolysis by F(1)F(o) ATP synthase to maintain its mitochondrial membrane potential (PubMed:29247468).</text>
</comment>
<comment type="subunit">
    <text evidence="2 3 4">F-type ATPases have 2 components, F(1) - the catalytic core - and F(o) - the membrane proton channel. F(1) has five subunits: alpha(3), beta(3), gamma(1), delta(1), epsilon(1), plus the additional subunit P18 (Tb427.05.1710) that is not present in F(1)F(o) ATP synthase from metazoa (PubMed:19436713, PubMed:29247468, PubMed:29440423). Subunit P18 (Tb927.5.1710) interacts with the alpha subunit with a 1:1 stoichiometry; the interaction is direct (PubMed:29440423). Subunit gamma is part of the central stalk (PubMed:29440423). F(o) has three main subunits: a, b and c (PubMed:19436713). The trypanosomal ATPase complex contains additional subunits that are not present in the F(1)F(o) ATP synthase from metazoa (PubMed:19436713, PubMed:29247468, PubMed:29440423).</text>
</comment>
<comment type="subcellular location">
    <subcellularLocation>
        <location>Mitochondrion</location>
    </subcellularLocation>
    <subcellularLocation>
        <location evidence="2 3 4">Mitochondrion inner membrane</location>
        <topology evidence="2 3 4">Peripheral membrane protein</topology>
        <orientation evidence="8 9 10">Matrix side</orientation>
    </subcellularLocation>
</comment>
<comment type="disruption phenotype">
    <text evidence="3">RNAi-mediated knockdown of the protein impairs assembly of the F(1) component and slows the proliferation rate of procyclic cells that are cultivated in vitro in the presence of glucose. RNAi-mediated knockdown of the protein also slows the proliferation rate of the bloodstream form of the parasite, despite the fact that the organism can profit from blood glucose as source of energy. Mitochondrial membrane potential is dramatically reduced in the bloodstream form that relies on ATP hydrolysis to maintain mitochondrial membrane potential.</text>
</comment>
<keyword id="KW-0002">3D-structure</keyword>
<keyword id="KW-0066">ATP synthesis</keyword>
<keyword id="KW-0139">CF(1)</keyword>
<keyword id="KW-0903">Direct protein sequencing</keyword>
<keyword id="KW-0375">Hydrogen ion transport</keyword>
<keyword id="KW-0406">Ion transport</keyword>
<keyword id="KW-0472">Membrane</keyword>
<keyword id="KW-0496">Mitochondrion</keyword>
<keyword id="KW-0999">Mitochondrion inner membrane</keyword>
<keyword id="KW-0677">Repeat</keyword>
<keyword id="KW-0809">Transit peptide</keyword>
<keyword id="KW-0813">Transport</keyword>
<dbReference type="EMBL" id="LS423648">
    <property type="status" value="NOT_ANNOTATED_CDS"/>
    <property type="molecule type" value="Genomic_DNA"/>
</dbReference>
<dbReference type="PDB" id="6F5D">
    <property type="method" value="X-ray"/>
    <property type="resolution" value="3.20 A"/>
    <property type="chains" value="J/K/L=19-188"/>
</dbReference>
<dbReference type="PDB" id="8AP6">
    <property type="method" value="EM"/>
    <property type="resolution" value="3.20 A"/>
    <property type="chains" value="J1/J2/K1/K2/L1/L2=1-188"/>
</dbReference>
<dbReference type="PDB" id="8APA">
    <property type="method" value="EM"/>
    <property type="resolution" value="3.70 A"/>
    <property type="chains" value="J1/K1/L1=1-188"/>
</dbReference>
<dbReference type="PDB" id="8APB">
    <property type="method" value="EM"/>
    <property type="resolution" value="3.80 A"/>
    <property type="chains" value="J1/K1/L1=1-188"/>
</dbReference>
<dbReference type="PDB" id="8APC">
    <property type="method" value="EM"/>
    <property type="resolution" value="3.50 A"/>
    <property type="chains" value="J1/K1/L1=1-188"/>
</dbReference>
<dbReference type="PDB" id="8APD">
    <property type="method" value="EM"/>
    <property type="resolution" value="3.70 A"/>
    <property type="chains" value="J1/K1/L1=1-188"/>
</dbReference>
<dbReference type="PDB" id="8APE">
    <property type="method" value="EM"/>
    <property type="resolution" value="3.70 A"/>
    <property type="chains" value="J1/K1/L1=1-188"/>
</dbReference>
<dbReference type="PDB" id="8APF">
    <property type="method" value="EM"/>
    <property type="resolution" value="4.30 A"/>
    <property type="chains" value="J1/K1/L1=1-188"/>
</dbReference>
<dbReference type="PDB" id="8APG">
    <property type="method" value="EM"/>
    <property type="resolution" value="3.50 A"/>
    <property type="chains" value="J1/K1/L1=1-188"/>
</dbReference>
<dbReference type="PDB" id="8APH">
    <property type="method" value="EM"/>
    <property type="resolution" value="3.80 A"/>
    <property type="chains" value="J1/K1/L1=1-188"/>
</dbReference>
<dbReference type="PDB" id="8APJ">
    <property type="method" value="EM"/>
    <property type="resolution" value="3.80 A"/>
    <property type="chains" value="J1/K1/L1=1-188"/>
</dbReference>
<dbReference type="PDB" id="8APK">
    <property type="method" value="EM"/>
    <property type="resolution" value="3.70 A"/>
    <property type="chains" value="J1/K1/L1=1-188"/>
</dbReference>
<dbReference type="PDBsum" id="6F5D"/>
<dbReference type="PDBsum" id="8AP6"/>
<dbReference type="PDBsum" id="8APA"/>
<dbReference type="PDBsum" id="8APB"/>
<dbReference type="PDBsum" id="8APC"/>
<dbReference type="PDBsum" id="8APD"/>
<dbReference type="PDBsum" id="8APE"/>
<dbReference type="PDBsum" id="8APF"/>
<dbReference type="PDBsum" id="8APG"/>
<dbReference type="PDBsum" id="8APH"/>
<dbReference type="PDBsum" id="8APJ"/>
<dbReference type="PDBsum" id="8APK"/>
<dbReference type="EMDB" id="EMD-15559"/>
<dbReference type="EMDB" id="EMD-15563"/>
<dbReference type="EMDB" id="EMD-15564"/>
<dbReference type="EMDB" id="EMD-15565"/>
<dbReference type="EMDB" id="EMD-15566"/>
<dbReference type="EMDB" id="EMD-15567"/>
<dbReference type="EMDB" id="EMD-15568"/>
<dbReference type="EMDB" id="EMD-15570"/>
<dbReference type="EMDB" id="EMD-15571"/>
<dbReference type="EMDB" id="EMD-15572"/>
<dbReference type="EMDB" id="EMD-15573"/>
<dbReference type="SMR" id="P0DPG4"/>
<dbReference type="TCDB" id="3.A.2.1.13">
    <property type="family name" value="the h+- or na+-translocating f-type, v-type and a-type atpase (f-atpase) superfamily"/>
</dbReference>
<dbReference type="GO" id="GO:0005743">
    <property type="term" value="C:mitochondrial inner membrane"/>
    <property type="evidence" value="ECO:0007669"/>
    <property type="project" value="UniProtKB-SubCell"/>
</dbReference>
<dbReference type="GO" id="GO:0045259">
    <property type="term" value="C:proton-transporting ATP synthase complex"/>
    <property type="evidence" value="ECO:0007669"/>
    <property type="project" value="UniProtKB-KW"/>
</dbReference>
<dbReference type="GO" id="GO:0006754">
    <property type="term" value="P:ATP biosynthetic process"/>
    <property type="evidence" value="ECO:0007669"/>
    <property type="project" value="UniProtKB-KW"/>
</dbReference>
<dbReference type="GO" id="GO:1902600">
    <property type="term" value="P:proton transmembrane transport"/>
    <property type="evidence" value="ECO:0007669"/>
    <property type="project" value="UniProtKB-KW"/>
</dbReference>
<dbReference type="Gene3D" id="1.25.40.10">
    <property type="entry name" value="Tetratricopeptide repeat domain"/>
    <property type="match status" value="1"/>
</dbReference>
<dbReference type="InterPro" id="IPR011990">
    <property type="entry name" value="TPR-like_helical_dom_sf"/>
</dbReference>
<gene>
    <name evidence="5" type="ORF">Tb427.05.1710</name>
</gene>
<reference key="1">
    <citation type="journal article" date="2018" name="Proc. Natl. Acad. Sci. U.S.A.">
        <title>ATP synthase from Trypanosoma brucei has an elaborated canonical F1-domain and conventional catalytic sites.</title>
        <authorList>
            <person name="Montgomery M.G."/>
            <person name="Gahura O."/>
            <person name="Leslie A.G.W."/>
            <person name="Zikova A."/>
            <person name="Walker J.E."/>
        </authorList>
    </citation>
    <scope>NUCLEOTIDE SEQUENCE [GENOMIC DNA] OF 19-188</scope>
    <scope>X-RAY CRYSTALLOGRAPHY (3.2 ANGSTROMS) OF 19-188</scope>
    <scope>FUNCTION</scope>
    <scope>SUBUNIT</scope>
    <scope>SUBCELLULAR LOCATION</scope>
    <source>
        <strain>427</strain>
    </source>
</reference>
<reference key="2">
    <citation type="journal article" date="2009" name="PLoS Pathog.">
        <title>The F(0)F(1)-ATP synthase complex contains novel subunits and is essential for procyclic Trypanosoma brucei.</title>
        <authorList>
            <person name="Zikova A."/>
            <person name="Schnaufer A."/>
            <person name="Dalley R.A."/>
            <person name="Panigrahi A.K."/>
            <person name="Stuart K.D."/>
        </authorList>
    </citation>
    <scope>FUNCTION</scope>
    <scope>SUBCELLULAR LOCATION</scope>
    <scope>SUBUNIT</scope>
    <scope>IDENTIFICATION BY MASS SPECTROMETRY</scope>
    <scope>NOMENCLATURE</scope>
    <source>
        <strain>427</strain>
    </source>
</reference>
<reference key="3">
    <citation type="journal article" date="2018" name="FEBS J.">
        <title>The F1-ATPase from Trypanosoma brucei is elaborated by three copies of an additional p18-subunit.</title>
        <authorList>
            <person name="Gahura O."/>
            <person name="Subrtova K."/>
            <person name="Vachova H."/>
            <person name="Panicucci B."/>
            <person name="Fearnley I.M."/>
            <person name="Harbour M.E."/>
            <person name="Walker J.E."/>
            <person name="Zikova A."/>
        </authorList>
    </citation>
    <scope>FUNCTION</scope>
    <scope>DISRUPTION PHENOTYPE</scope>
    <scope>PROTEIN SEQUENCE OF 19-23</scope>
    <scope>SUBCELLULAR LOCATION</scope>
    <scope>TOPOLOGY</scope>
    <scope>SUBUNIT</scope>
    <scope>IDENTIFICATION BY MASS SPECTROMETRY</scope>
    <source>
        <strain>427</strain>
    </source>
</reference>
<protein>
    <recommendedName>
        <fullName evidence="6">ATP synthase subunit p18, mitochondrial</fullName>
    </recommendedName>
    <alternativeName>
        <fullName evidence="5">ATP synthase F1 subunit p18</fullName>
    </alternativeName>
</protein>
<evidence type="ECO:0000255" key="1">
    <source>
        <dbReference type="PROSITE-ProRule" id="PRU00708"/>
    </source>
</evidence>
<evidence type="ECO:0000269" key="2">
    <source>
    </source>
</evidence>
<evidence type="ECO:0000269" key="3">
    <source>
    </source>
</evidence>
<evidence type="ECO:0000269" key="4">
    <source>
    </source>
</evidence>
<evidence type="ECO:0000303" key="5">
    <source>
    </source>
</evidence>
<evidence type="ECO:0000303" key="6">
    <source>
    </source>
</evidence>
<evidence type="ECO:0000305" key="7"/>
<evidence type="ECO:0000305" key="8">
    <source>
    </source>
</evidence>
<evidence type="ECO:0000305" key="9">
    <source>
    </source>
</evidence>
<evidence type="ECO:0000305" key="10">
    <source>
    </source>
</evidence>
<organism>
    <name type="scientific">Trypanosoma brucei brucei</name>
    <dbReference type="NCBI Taxonomy" id="5702"/>
    <lineage>
        <taxon>Eukaryota</taxon>
        <taxon>Discoba</taxon>
        <taxon>Euglenozoa</taxon>
        <taxon>Kinetoplastea</taxon>
        <taxon>Metakinetoplastina</taxon>
        <taxon>Trypanosomatida</taxon>
        <taxon>Trypanosomatidae</taxon>
        <taxon>Trypanosoma</taxon>
    </lineage>
</organism>
<proteinExistence type="evidence at protein level"/>
<name>ATP18_TRYBB</name>
<feature type="transit peptide" description="Mitochondrion" evidence="3">
    <location>
        <begin position="1"/>
        <end position="18"/>
    </location>
</feature>
<feature type="chain" id="PRO_0000444146" description="ATP synthase subunit p18, mitochondrial">
    <location>
        <begin position="19"/>
        <end position="188"/>
    </location>
</feature>
<feature type="repeat" description="PPR" evidence="10">
    <location>
        <begin position="36"/>
        <end position="70"/>
    </location>
</feature>
<feature type="repeat" description="PPR" evidence="10">
    <location>
        <begin position="75"/>
        <end position="109"/>
    </location>
</feature>
<feature type="repeat" description="PPR" evidence="1 10">
    <location>
        <begin position="116"/>
        <end position="146"/>
    </location>
</feature>
<accession>P0DPG4</accession>